<organism>
    <name type="scientific">Human papillomavirus 65</name>
    <dbReference type="NCBI Taxonomy" id="28312"/>
    <lineage>
        <taxon>Viruses</taxon>
        <taxon>Monodnaviria</taxon>
        <taxon>Shotokuvirae</taxon>
        <taxon>Cossaviricota</taxon>
        <taxon>Papovaviricetes</taxon>
        <taxon>Zurhausenvirales</taxon>
        <taxon>Papillomaviridae</taxon>
        <taxon>Firstpapillomavirinae</taxon>
        <taxon>Gammapapillomavirus</taxon>
        <taxon>Gammapapillomavirus 1</taxon>
    </lineage>
</organism>
<protein>
    <recommendedName>
        <fullName evidence="1">Replication protein E1</fullName>
        <ecNumber evidence="1">5.6.2.4</ecNumber>
    </recommendedName>
    <alternativeName>
        <fullName evidence="1">ATP-dependent helicase E1</fullName>
    </alternativeName>
    <alternativeName>
        <fullName evidence="1">DNA 3'-5' helicase E1</fullName>
    </alternativeName>
</protein>
<dbReference type="EC" id="5.6.2.4" evidence="1"/>
<dbReference type="EMBL" id="X70829">
    <property type="protein sequence ID" value="CAA50173.1"/>
    <property type="molecule type" value="Genomic_DNA"/>
</dbReference>
<dbReference type="SMR" id="Q07848"/>
<dbReference type="Proteomes" id="UP000007672">
    <property type="component" value="Genome"/>
</dbReference>
<dbReference type="GO" id="GO:0042025">
    <property type="term" value="C:host cell nucleus"/>
    <property type="evidence" value="ECO:0007669"/>
    <property type="project" value="UniProtKB-SubCell"/>
</dbReference>
<dbReference type="GO" id="GO:0005524">
    <property type="term" value="F:ATP binding"/>
    <property type="evidence" value="ECO:0007669"/>
    <property type="project" value="UniProtKB-UniRule"/>
</dbReference>
<dbReference type="GO" id="GO:0016887">
    <property type="term" value="F:ATP hydrolysis activity"/>
    <property type="evidence" value="ECO:0007669"/>
    <property type="project" value="RHEA"/>
</dbReference>
<dbReference type="GO" id="GO:0003677">
    <property type="term" value="F:DNA binding"/>
    <property type="evidence" value="ECO:0007669"/>
    <property type="project" value="UniProtKB-UniRule"/>
</dbReference>
<dbReference type="GO" id="GO:0003678">
    <property type="term" value="F:DNA helicase activity"/>
    <property type="evidence" value="ECO:0007669"/>
    <property type="project" value="UniProtKB-UniRule"/>
</dbReference>
<dbReference type="GO" id="GO:0006260">
    <property type="term" value="P:DNA replication"/>
    <property type="evidence" value="ECO:0007669"/>
    <property type="project" value="UniProtKB-UniRule"/>
</dbReference>
<dbReference type="Gene3D" id="3.40.1310.10">
    <property type="match status" value="1"/>
</dbReference>
<dbReference type="Gene3D" id="3.40.50.300">
    <property type="entry name" value="P-loop containing nucleotide triphosphate hydrolases"/>
    <property type="match status" value="1"/>
</dbReference>
<dbReference type="Gene3D" id="1.10.10.510">
    <property type="entry name" value="Zinc finger, large T-antigen D1 domain"/>
    <property type="match status" value="1"/>
</dbReference>
<dbReference type="HAMAP" id="MF_04000">
    <property type="entry name" value="PPV_E1"/>
    <property type="match status" value="1"/>
</dbReference>
<dbReference type="InterPro" id="IPR014015">
    <property type="entry name" value="Helicase_SF3_DNA-vir"/>
</dbReference>
<dbReference type="InterPro" id="IPR027417">
    <property type="entry name" value="P-loop_NTPase"/>
</dbReference>
<dbReference type="InterPro" id="IPR001177">
    <property type="entry name" value="PPV_DNA_helicase_E1_C"/>
</dbReference>
<dbReference type="InterPro" id="IPR014000">
    <property type="entry name" value="PPV_DNA_helicase_E1_N"/>
</dbReference>
<dbReference type="InterPro" id="IPR046832">
    <property type="entry name" value="PPV_E1_DBD"/>
</dbReference>
<dbReference type="InterPro" id="IPR046935">
    <property type="entry name" value="PPV_E1_DBD_sf"/>
</dbReference>
<dbReference type="InterPro" id="IPR016393">
    <property type="entry name" value="Rep_E1_papillomaV"/>
</dbReference>
<dbReference type="InterPro" id="IPR037102">
    <property type="entry name" value="Znf_lg_T-Ag_D1_dom_sf"/>
</dbReference>
<dbReference type="Pfam" id="PF00519">
    <property type="entry name" value="PPV_E1_C"/>
    <property type="match status" value="1"/>
</dbReference>
<dbReference type="Pfam" id="PF20450">
    <property type="entry name" value="PPV_E1_DBD"/>
    <property type="match status" value="1"/>
</dbReference>
<dbReference type="Pfam" id="PF00524">
    <property type="entry name" value="PPV_E1_N"/>
    <property type="match status" value="1"/>
</dbReference>
<dbReference type="PIRSF" id="PIRSF003383">
    <property type="entry name" value="Rep_E1_papillomaV"/>
    <property type="match status" value="1"/>
</dbReference>
<dbReference type="SUPFAM" id="SSF55464">
    <property type="entry name" value="Origin of replication-binding domain, RBD-like"/>
    <property type="match status" value="1"/>
</dbReference>
<dbReference type="SUPFAM" id="SSF52540">
    <property type="entry name" value="P-loop containing nucleoside triphosphate hydrolases"/>
    <property type="match status" value="1"/>
</dbReference>
<dbReference type="PROSITE" id="PS51206">
    <property type="entry name" value="SF3_HELICASE_1"/>
    <property type="match status" value="1"/>
</dbReference>
<comment type="function">
    <text evidence="1">ATP-dependent DNA 3'-5' helicase required for initiation of viral DNA replication. It forms a complex with the viral E2 protein. The E1-E2 complex binds to the replication origin which contains binding sites for both proteins. During the initial step, a dimer of E1 interacts with a dimer of protein E2 leading to a complex that binds the viral origin of replication with high specificity. Then, a second dimer of E1 displaces the E2 dimer in an ATP-dependent manner to form the E1 tetramer. Following this, two E1 monomers are added to each half of the site, which results in the formation of two E1 trimers on the viral ori. Subsequently, two hexamers will be created. The double hexamer acts as a bi-directional helicase machinery and unwinds the viral DNA and then recruits the host DNA polymerase to start replication.</text>
</comment>
<comment type="catalytic activity">
    <reaction evidence="1">
        <text>Couples ATP hydrolysis with the unwinding of duplex DNA by translocating in the 3'-5' direction.</text>
        <dbReference type="EC" id="5.6.2.4"/>
    </reaction>
</comment>
<comment type="catalytic activity">
    <reaction evidence="1">
        <text>ATP + H2O = ADP + phosphate + H(+)</text>
        <dbReference type="Rhea" id="RHEA:13065"/>
        <dbReference type="ChEBI" id="CHEBI:15377"/>
        <dbReference type="ChEBI" id="CHEBI:15378"/>
        <dbReference type="ChEBI" id="CHEBI:30616"/>
        <dbReference type="ChEBI" id="CHEBI:43474"/>
        <dbReference type="ChEBI" id="CHEBI:456216"/>
        <dbReference type="EC" id="5.6.2.4"/>
    </reaction>
</comment>
<comment type="subunit">
    <text evidence="1">Can form hexamers. Interacts with E2 protein; this interaction increases E1 DNA binding specificity. Interacts with host DNA polymerase subunit POLA2. Interacts with host single stranded DNA-binding protein RPA1. Interacts with host TOP1; this interaction stimulates the enzymatic activity of TOP1.</text>
</comment>
<comment type="subcellular location">
    <subcellularLocation>
        <location evidence="1">Host nucleus</location>
    </subcellularLocation>
</comment>
<comment type="PTM">
    <text evidence="1">Phosphorylated.</text>
</comment>
<comment type="PTM">
    <text evidence="1">Sumoylated.</text>
</comment>
<comment type="similarity">
    <text evidence="1">Belongs to the papillomaviridae E1 protein family.</text>
</comment>
<gene>
    <name evidence="1" type="primary">E1</name>
</gene>
<proteinExistence type="inferred from homology"/>
<reference key="1">
    <citation type="journal article" date="1993" name="Virology">
        <title>Two novel types of human papillomavirus, HPV 63 and HPV 65: comparisons of their clinical and histological features and DNA sequences to other HPV types.</title>
        <authorList>
            <person name="Egawa K."/>
            <person name="Delius H."/>
            <person name="Matsukura T."/>
            <person name="Kawashima M."/>
            <person name="de Villiers E.M."/>
        </authorList>
    </citation>
    <scope>NUCLEOTIDE SEQUENCE [GENOMIC DNA]</scope>
</reference>
<evidence type="ECO:0000255" key="1">
    <source>
        <dbReference type="HAMAP-Rule" id="MF_04000"/>
    </source>
</evidence>
<evidence type="ECO:0000256" key="2">
    <source>
        <dbReference type="SAM" id="MobiDB-lite"/>
    </source>
</evidence>
<keyword id="KW-0067">ATP-binding</keyword>
<keyword id="KW-0235">DNA replication</keyword>
<keyword id="KW-0238">DNA-binding</keyword>
<keyword id="KW-0244">Early protein</keyword>
<keyword id="KW-0347">Helicase</keyword>
<keyword id="KW-1048">Host nucleus</keyword>
<keyword id="KW-0378">Hydrolase</keyword>
<keyword id="KW-0413">Isomerase</keyword>
<keyword id="KW-1017">Isopeptide bond</keyword>
<keyword id="KW-0547">Nucleotide-binding</keyword>
<keyword id="KW-0597">Phosphoprotein</keyword>
<keyword id="KW-0832">Ubl conjugation</keyword>
<accession>Q07848</accession>
<organismHost>
    <name type="scientific">Homo sapiens</name>
    <name type="common">Human</name>
    <dbReference type="NCBI Taxonomy" id="9606"/>
</organismHost>
<sequence length="598" mass="68352">MADKGTENFDLEGSSWYIVHEAECTDSIDTLEDLCDESDSNVSNLIDDDVVDQGNSLALYNAKITDDCDNAIAHLKRKYNKSPEQAVAELSPQLQAVKITPERNSKRRLFQEDSGIFEDEAENSLTQVESNSQTGGNSQDGGGDINLLLLQTSNRRATMLAKFKDWYGVSYNEITRVYKSDKSCSDNWVIVIFRAAVEVLESSKIVLQQHCTYIQVKIFGFSALYLLQFKSAKSRETVQKLMCSMLNIQEFQILTDPPKLRSVPTALYFYKQAMLTESFVFGQTPDWIAKQTLVSHQAATTAETFELSKMVQWAYDNNLLEECDIAYHYAMYADEDANAAAYLKSNNQVKHVRDCSTMVRMYKRYEMRDMSMSEWIYKCCDECTEEGDWKPISQFLKYQGVNILSFLIVLKSFLKGIPKKNCIVIHGPPDTGKSLFCYSLVKFLKGKVVSYVNRSSHFWLQPLMDCKVGFMDDATYVCWTYIDQNLRNALDGNPMCIDAKHRAPQQLKLPPMLITSNIDVKQEQSLMYLHSRVQCFSFPNKMPFLDDGSPMYTFTDATWKSFFQKLGRQLELTDPEEESNGVPSRAFRCTSRSNSDSY</sequence>
<feature type="chain" id="PRO_0000133156" description="Replication protein E1">
    <location>
        <begin position="1"/>
        <end position="598"/>
    </location>
</feature>
<feature type="domain" description="SF3 helicase" evidence="1">
    <location>
        <begin position="401"/>
        <end position="551"/>
    </location>
</feature>
<feature type="region of interest" description="DNA-binding region" evidence="1">
    <location>
        <begin position="138"/>
        <end position="302"/>
    </location>
</feature>
<feature type="region of interest" description="Disordered" evidence="2">
    <location>
        <begin position="573"/>
        <end position="598"/>
    </location>
</feature>
<feature type="short sequence motif" description="Nuclear localization signal" evidence="1">
    <location>
        <begin position="76"/>
        <end position="78"/>
    </location>
</feature>
<feature type="short sequence motif" description="Nuclear export signal" evidence="1">
    <location>
        <begin position="90"/>
        <end position="99"/>
    </location>
</feature>
<feature type="binding site" evidence="1">
    <location>
        <begin position="427"/>
        <end position="434"/>
    </location>
    <ligand>
        <name>ATP</name>
        <dbReference type="ChEBI" id="CHEBI:30616"/>
    </ligand>
</feature>
<feature type="modified residue" description="Phosphoserine; by host" evidence="1">
    <location>
        <position position="82"/>
    </location>
</feature>
<feature type="modified residue" description="Phosphoserine; by host" evidence="1">
    <location>
        <position position="91"/>
    </location>
</feature>
<feature type="cross-link" description="Glycyl lysine isopeptide (Lys-Gly) (interchain with G-Cter in SUMO)" evidence="1">
    <location>
        <position position="508"/>
    </location>
</feature>
<name>VE1_HPV65</name>